<accession>P41047</accession>
<accession>Q61217</accession>
<accession>Q9R1F2</accession>
<keyword id="KW-0025">Alternative splicing</keyword>
<keyword id="KW-0053">Apoptosis</keyword>
<keyword id="KW-1003">Cell membrane</keyword>
<keyword id="KW-0202">Cytokine</keyword>
<keyword id="KW-0968">Cytoplasmic vesicle</keyword>
<keyword id="KW-0225">Disease variant</keyword>
<keyword id="KW-1015">Disulfide bond</keyword>
<keyword id="KW-0325">Glycoprotein</keyword>
<keyword id="KW-0458">Lysosome</keyword>
<keyword id="KW-0472">Membrane</keyword>
<keyword id="KW-0539">Nucleus</keyword>
<keyword id="KW-1185">Reference proteome</keyword>
<keyword id="KW-0678">Repressor</keyword>
<keyword id="KW-0964">Secreted</keyword>
<keyword id="KW-0735">Signal-anchor</keyword>
<keyword id="KW-0804">Transcription</keyword>
<keyword id="KW-0805">Transcription regulation</keyword>
<keyword id="KW-0812">Transmembrane</keyword>
<keyword id="KW-1133">Transmembrane helix</keyword>
<keyword id="KW-0832">Ubl conjugation</keyword>
<evidence type="ECO:0000250" key="1"/>
<evidence type="ECO:0000250" key="2">
    <source>
        <dbReference type="UniProtKB" id="P48023"/>
    </source>
</evidence>
<evidence type="ECO:0000255" key="3"/>
<evidence type="ECO:0000255" key="4">
    <source>
        <dbReference type="PROSITE-ProRule" id="PRU01387"/>
    </source>
</evidence>
<evidence type="ECO:0000256" key="5">
    <source>
        <dbReference type="SAM" id="MobiDB-lite"/>
    </source>
</evidence>
<evidence type="ECO:0000269" key="6">
    <source>
    </source>
</evidence>
<evidence type="ECO:0000269" key="7">
    <source>
    </source>
</evidence>
<evidence type="ECO:0000269" key="8">
    <source>
    </source>
</evidence>
<evidence type="ECO:0000269" key="9">
    <source>
    </source>
</evidence>
<evidence type="ECO:0000269" key="10">
    <source>
    </source>
</evidence>
<evidence type="ECO:0000303" key="11">
    <source>
    </source>
</evidence>
<evidence type="ECO:0000305" key="12"/>
<organism>
    <name type="scientific">Mus musculus</name>
    <name type="common">Mouse</name>
    <dbReference type="NCBI Taxonomy" id="10090"/>
    <lineage>
        <taxon>Eukaryota</taxon>
        <taxon>Metazoa</taxon>
        <taxon>Chordata</taxon>
        <taxon>Craniata</taxon>
        <taxon>Vertebrata</taxon>
        <taxon>Euteleostomi</taxon>
        <taxon>Mammalia</taxon>
        <taxon>Eutheria</taxon>
        <taxon>Euarchontoglires</taxon>
        <taxon>Glires</taxon>
        <taxon>Rodentia</taxon>
        <taxon>Myomorpha</taxon>
        <taxon>Muroidea</taxon>
        <taxon>Muridae</taxon>
        <taxon>Murinae</taxon>
        <taxon>Mus</taxon>
        <taxon>Mus</taxon>
    </lineage>
</organism>
<comment type="function">
    <text evidence="2 7 8 9">Cytokine that binds to TNFRSF6/FAS, a receptor that transduces the apoptotic signal into cells (PubMed:7511063). Involved in cytotoxic T-cell-mediated apoptosis, natural killer cell-mediated apoptosis and in T-cell development (PubMed:19794494, PubMed:7532682). Initiates fratricidal/suicidal activation-induced cell death (AICD) in antigen-activated T-cells contributing to the termination of immune responses (PubMed:19794494). TNFRSF6/FAS-mediated apoptosis also has a role in the induction of peripheral tolerance (PubMed:10779162). Binds to TNFRSF6B/DcR3, a decoy receptor that blocks apoptosis (By similarity).</text>
</comment>
<comment type="function">
    <molecule>Tumor necrosis factor ligand superfamily member 6, soluble form</molecule>
    <text evidence="2 7">Induces FAS-mediated activation of NF-kappa-B, initiating non-apoptotic signaling pathways (PubMed:19794494). Can induce apoptosis but does not appear to be essential for this process (By similarity).</text>
</comment>
<comment type="function">
    <molecule>FasL intracellular domain</molecule>
    <text evidence="2">Cytoplasmic form induces gene transcription inhibition.</text>
</comment>
<comment type="subunit">
    <text evidence="2">Homotrimer. Interacts with ARHGAP9, BAIAP2L1, BTK, CACNB3, CACNB4, CRK, DLG2, DNMBP, DOCK4, EPS8L3, FGR, FYB1, FYN, HCK, ITK, ITSN2, KALRN, LYN, MACC1, MIA, MPP4, MYO15A, NCF1, NCK1, NCK2, NCKIPSD, OSTF1, PIK3R1, PSTPIP1, RIMBP3C, SAMSN1, SH3GL3, SH3PXD2B, SH3PXD2A, SH3RF2, SKAP2, SNX33, SNX9, SORBS3, SPTA1, SRC, SRGAP1, SRGAP2, SRGAP3, TEC, TJP3 and YES1.</text>
</comment>
<comment type="subcellular location">
    <molecule>Isoform FasL</molecule>
    <subcellularLocation>
        <location evidence="7 9">Cell membrane</location>
        <topology evidence="3">Single-pass type II membrane protein</topology>
    </subcellularLocation>
    <subcellularLocation>
        <location evidence="2">Cytoplasmic vesicle lumen</location>
    </subcellularLocation>
    <subcellularLocation>
        <location evidence="2">Lysosome lumen</location>
    </subcellularLocation>
    <text evidence="2">Is internalized into multivesicular bodies of secretory lysosomes after phosphorylation by FGR and monoubiquitination. Colocalizes with the SPPL2A protease at the cell membrane.</text>
</comment>
<comment type="subcellular location">
    <molecule>Tumor necrosis factor ligand superfamily member 6, soluble form</molecule>
    <subcellularLocation>
        <location evidence="6 7">Secreted</location>
    </subcellularLocation>
    <text evidence="2">May be released into the extracellular fluid by cleavage from the cell surface.</text>
</comment>
<comment type="subcellular location">
    <molecule>FasL intracellular domain</molecule>
    <subcellularLocation>
        <location evidence="2">Nucleus</location>
    </subcellularLocation>
    <text evidence="2">The FasL ICD cytoplasmic form is translocated into the nucleus.</text>
</comment>
<comment type="alternative products">
    <event type="alternative splicing"/>
    <isoform>
        <id>P41047-1</id>
        <name>FasL</name>
        <sequence type="displayed"/>
    </isoform>
    <isoform>
        <id>P41047-2</id>
        <name>FasLS</name>
        <sequence type="described" ref="VSP_006445"/>
    </isoform>
</comment>
<comment type="tissue specificity">
    <text evidence="7 9">Expressed in T-cells (PubMed:19794494). Expressed in natural killer cells (PubMed:7532682).</text>
</comment>
<comment type="PTM">
    <text evidence="2">The soluble form derives from the membrane form by proteolytic processing. The membrane-bound form undergoes two successive intramembrane proteolytic cleavages. The first one is processed by ADAM10 producing an N-terminal fragment, which lacks the receptor-binding extracellular domain. This ADAM10-processed FasL (FAsL APL) remnant form is still membrane anchored and further processed by SPPL2A that liberates the FasL intracellular domain (FasL ICD). FasL shedding by ADAM10 is a prerequisite for subsequent intramembrane cleavage by SPPL2A in T-cells.</text>
</comment>
<comment type="PTM">
    <text evidence="2">Phosphorylated by FGR on tyrosine residues; this is required for ubiquitination and subsequent internalization.</text>
</comment>
<comment type="PTM">
    <text evidence="2">N-glycosylated. Glycosylation enhances apoptotic activity.</text>
</comment>
<comment type="PTM">
    <text evidence="2">Monoubiquitinated.</text>
</comment>
<comment type="disease">
    <text evidence="8">A deficiency in this protein is the cause of generalized lymphoproliferation disease phenotype (gld). Gld mice present lymphadenopathy and autoantibody production. The phenotype is recessively inherited.</text>
</comment>
<comment type="similarity">
    <text evidence="12">Belongs to the tumor necrosis factor family.</text>
</comment>
<gene>
    <name type="primary">Faslg</name>
    <name type="synonym">Apt1lg1</name>
    <name type="synonym">Cd95l</name>
    <name type="synonym">Fasl</name>
    <name type="synonym">gld</name>
    <name type="synonym">Tnfsf6</name>
</gene>
<feature type="chain" id="PRO_0000034508" description="Tumor necrosis factor ligand superfamily member 6, membrane form">
    <location>
        <begin position="1"/>
        <end position="279"/>
    </location>
</feature>
<feature type="chain" id="PRO_0000417159" description="ADAM10-processed FasL form" evidence="1">
    <location>
        <begin position="1"/>
        <end position="127"/>
    </location>
</feature>
<feature type="chain" id="PRO_0000417160" description="FasL intracellular domain" evidence="1">
    <location>
        <begin position="1"/>
        <end position="80"/>
    </location>
</feature>
<feature type="chain" id="PRO_0000034509" description="Tumor necrosis factor ligand superfamily member 6, soluble form" evidence="1">
    <location>
        <begin position="128"/>
        <end position="279"/>
    </location>
</feature>
<feature type="topological domain" description="Cytoplasmic" evidence="3">
    <location>
        <begin position="1"/>
        <end position="78"/>
    </location>
</feature>
<feature type="transmembrane region" description="Helical; Signal-anchor for type II membrane protein" evidence="3">
    <location>
        <begin position="79"/>
        <end position="100"/>
    </location>
</feature>
<feature type="topological domain" description="Extracellular" evidence="3">
    <location>
        <begin position="101"/>
        <end position="279"/>
    </location>
</feature>
<feature type="domain" description="THD" evidence="4">
    <location>
        <begin position="143"/>
        <end position="279"/>
    </location>
</feature>
<feature type="region of interest" description="Disordered" evidence="5">
    <location>
        <begin position="30"/>
        <end position="70"/>
    </location>
</feature>
<feature type="region of interest" description="Disordered" evidence="5">
    <location>
        <begin position="126"/>
        <end position="150"/>
    </location>
</feature>
<feature type="compositionally biased region" description="Pro residues" evidence="5">
    <location>
        <begin position="45"/>
        <end position="68"/>
    </location>
</feature>
<feature type="compositionally biased region" description="Polar residues" evidence="5">
    <location>
        <begin position="126"/>
        <end position="135"/>
    </location>
</feature>
<feature type="site" description="Cleavage; by SPPL2A" evidence="1">
    <location>
        <begin position="79"/>
        <end position="80"/>
    </location>
</feature>
<feature type="site" description="Cleavage; by ADAM10" evidence="1">
    <location>
        <begin position="127"/>
        <end position="128"/>
    </location>
</feature>
<feature type="glycosylation site" description="N-linked (GlcNAc...) asparagine" evidence="3">
    <location>
        <position position="117"/>
    </location>
</feature>
<feature type="glycosylation site" description="N-linked (GlcNAc...) asparagine" evidence="3">
    <location>
        <position position="182"/>
    </location>
</feature>
<feature type="glycosylation site" description="N-linked (GlcNAc...) asparagine" evidence="3">
    <location>
        <position position="248"/>
    </location>
</feature>
<feature type="glycosylation site" description="N-linked (GlcNAc...) asparagine" evidence="3">
    <location>
        <position position="258"/>
    </location>
</feature>
<feature type="disulfide bond" evidence="4">
    <location>
        <begin position="200"/>
        <end position="231"/>
    </location>
</feature>
<feature type="splice variant" id="VSP_006445" description="In isoform FasLS." evidence="11">
    <location>
        <begin position="1"/>
        <end position="210"/>
    </location>
</feature>
<feature type="sequence variant" description="In strain: BALB/c, DBA/1 and DBA/2; enhances cytotoxicity." evidence="10">
    <original>T</original>
    <variation>A</variation>
    <location>
        <position position="184"/>
    </location>
</feature>
<feature type="sequence variant" description="In strain: BALB/c, DBA/1 and DBA/2; enhances cytotoxicity." evidence="10">
    <original>E</original>
    <variation>G</variation>
    <location>
        <position position="218"/>
    </location>
</feature>
<feature type="sequence variant" description="In gld; abolishes binding of FASL to its receptor.">
    <original>F</original>
    <variation>L</variation>
    <location>
        <position position="273"/>
    </location>
</feature>
<proteinExistence type="evidence at protein level"/>
<reference key="1">
    <citation type="journal article" date="1994" name="Cell">
        <title>Generalized lymphoproliferative disease in mice, caused by a point mutation in the Fas ligand.</title>
        <authorList>
            <person name="Takahashi T."/>
            <person name="Tanaka M."/>
            <person name="Brannan C.I."/>
            <person name="Jenkins N.A."/>
            <person name="Copeland N.G."/>
            <person name="Suda T."/>
            <person name="Nagata S."/>
        </authorList>
    </citation>
    <scope>NUCLEOTIDE SEQUENCE [MRNA] (ISOFORM FASL)</scope>
    <scope>FUNCTION</scope>
</reference>
<reference key="2">
    <citation type="journal article" date="1995" name="Mol. Immunol.">
        <title>Comparative molecular modelling of the Fas-ligand and other members of the TNF family.</title>
        <authorList>
            <person name="Peitsch M.C."/>
            <person name="Tschopp J."/>
        </authorList>
    </citation>
    <scope>NUCLEOTIDE SEQUENCE [MRNA] (ISOFORM FASL)</scope>
    <scope>3D-STRUCTURE MODELING</scope>
    <source>
        <strain>C57BL/6J</strain>
    </source>
</reference>
<reference key="3">
    <citation type="journal article" date="1994" name="Immunity">
        <title>The mouse Fas-ligand gene is mutated in gld mice and is part of a TNF family gene cluster.</title>
        <authorList>
            <person name="Lynch D.H."/>
            <person name="Watson M.L."/>
            <person name="Alderson M.R."/>
            <person name="Baum P.R."/>
            <person name="Miller R.E."/>
            <person name="Tough T."/>
            <person name="Gibson M."/>
            <person name="Davis-Smith T."/>
            <person name="Smith C.A."/>
            <person name="Hunter K."/>
        </authorList>
    </citation>
    <scope>NUCLEOTIDE SEQUENCE [MRNA] (ISOFORM FASL)</scope>
</reference>
<reference key="4">
    <citation type="submission" date="1996-05" db="EMBL/GenBank/DDBJ databases">
        <title>Mus musculus Balb/c Fas ligand differs from 129/SV Fas ligand in two amino acids.</title>
        <authorList>
            <person name="Fenner M.H."/>
            <person name="Shioda T."/>
            <person name="Isselbacher K.J."/>
        </authorList>
    </citation>
    <scope>NUCLEOTIDE SEQUENCE [MRNA] (ISOFORM FASL)</scope>
    <source>
        <strain>BALB/cJ</strain>
    </source>
</reference>
<reference key="5">
    <citation type="journal article" date="1999" name="Blood">
        <title>Cloning and expression of a short Fas ligand: a new alternatively spliced product of the mouse Fas ligand gene.</title>
        <authorList>
            <person name="Ayroldi E."/>
            <person name="D'Adamio F."/>
            <person name="Zollo O."/>
            <person name="Agostini M."/>
            <person name="Moraca R."/>
            <person name="Cannarile L."/>
            <person name="Migliorati G."/>
            <person name="Delfino D.V."/>
            <person name="Riccardi C."/>
        </authorList>
    </citation>
    <scope>NUCLEOTIDE SEQUENCE [MRNA] (ISOFORM FASLS)</scope>
    <scope>SUBCELLULAR LOCATION</scope>
    <source>
        <strain>C3H/HeJ</strain>
        <tissue>Spleen</tissue>
    </source>
</reference>
<reference key="6">
    <citation type="journal article" date="1995" name="J. Exp. Med.">
        <title>Fas-mediated cytotoxicity by freshly isolated natural killer cells.</title>
        <authorList>
            <person name="Arase H."/>
            <person name="Arase N."/>
            <person name="Saito T."/>
        </authorList>
    </citation>
    <scope>FUNCTION</scope>
    <scope>SUBCELLULAR LOCATION</scope>
    <scope>TISSUE SPECIFICITY</scope>
</reference>
<reference key="7">
    <citation type="journal article" date="2000" name="Hum. Gene Ther.">
        <title>Antigen-specific induction of peripheral T cell tolerance in vivo by codelivery of DNA vectors encoding antigen and Fas ligand.</title>
        <authorList>
            <person name="Georgantas R.W. III"/>
            <person name="Leong K.W."/>
            <person name="August J.T."/>
        </authorList>
    </citation>
    <scope>FUNCTION</scope>
</reference>
<reference key="8">
    <citation type="journal article" date="2009" name="Nature">
        <title>Membrane-bound Fas ligand only is essential for Fas-induced apoptosis.</title>
        <authorList>
            <person name="O'Reilly L.A."/>
            <person name="Tai L."/>
            <person name="Lee L."/>
            <person name="Kruse E.A."/>
            <person name="Grabow S."/>
            <person name="Fairlie W.D."/>
            <person name="Haynes N.M."/>
            <person name="Tarlinton D.M."/>
            <person name="Zhang J.G."/>
            <person name="Belz G.T."/>
            <person name="Smyth M.J."/>
            <person name="Bouillet P."/>
            <person name="Robb L."/>
            <person name="Strasser A."/>
        </authorList>
    </citation>
    <scope>FUNCTION</scope>
    <scope>SUBCELLULAR LOCATION</scope>
    <scope>TISSUE SPECIFICITY</scope>
</reference>
<reference key="9">
    <citation type="journal article" date="1995" name="Int. Immunol.">
        <title>Characterization of the non-functional Fas ligand of gld mice.</title>
        <authorList>
            <person name="Hahne M."/>
            <person name="Peitsch M.C."/>
            <person name="Irmler M."/>
            <person name="Schroeter M."/>
            <person name="Lowin B."/>
            <person name="Rousseau M."/>
            <person name="Bron C."/>
            <person name="Renno T."/>
            <person name="French L."/>
            <person name="Tschopp J."/>
        </authorList>
    </citation>
    <scope>CHARACTERIZATION OF VARIANT GLD</scope>
</reference>
<reference key="10">
    <citation type="journal article" date="1997" name="Proc. Natl. Acad. Sci. U.S.A.">
        <title>Polymorphism of murine Fas ligand that affects the biological activity.</title>
        <authorList>
            <person name="Kayagaki N."/>
            <person name="Yamaguchi N."/>
            <person name="Nagao F."/>
            <person name="Matsuo S."/>
            <person name="Maeda H."/>
            <person name="Okumura K."/>
            <person name="Yagita H."/>
        </authorList>
    </citation>
    <scope>VARIANTS ALA-184 AND GLY-218</scope>
    <source>
        <strain>BALB/cJ</strain>
        <strain>C3H/HeJ</strain>
        <strain>C57BL/6J</strain>
        <strain>DBA/1</strain>
        <strain>DBA/2J</strain>
        <strain>MRL/MpJ</strain>
        <strain>NOD</strain>
        <strain>NZB</strain>
        <strain>NZW/LacJ</strain>
        <strain>SJL/J</strain>
    </source>
</reference>
<protein>
    <recommendedName>
        <fullName>Tumor necrosis factor ligand superfamily member 6</fullName>
    </recommendedName>
    <alternativeName>
        <fullName>CD95 ligand</fullName>
        <shortName>CD95-L</shortName>
    </alternativeName>
    <alternativeName>
        <fullName>Fas antigen ligand</fullName>
        <shortName>Fas ligand</shortName>
        <shortName>FasL</shortName>
    </alternativeName>
    <cdAntigenName>CD178</cdAntigenName>
    <component>
        <recommendedName>
            <fullName>Tumor necrosis factor ligand superfamily member 6, membrane form</fullName>
        </recommendedName>
    </component>
    <component>
        <recommendedName>
            <fullName>Tumor necrosis factor ligand superfamily member 6, soluble form</fullName>
        </recommendedName>
        <alternativeName>
            <fullName>Receptor-binding FasL ectodomain</fullName>
        </alternativeName>
        <alternativeName>
            <fullName>Soluble Fas ligand</fullName>
            <shortName>sFasL</shortName>
        </alternativeName>
    </component>
    <component>
        <recommendedName>
            <fullName>ADAM10-processed FasL form</fullName>
            <shortName>APL</shortName>
        </recommendedName>
    </component>
    <component>
        <recommendedName>
            <fullName>FasL intracellular domain</fullName>
            <shortName>FasL ICD</shortName>
        </recommendedName>
        <alternativeName>
            <fullName>SPPL2A-processed FasL form</fullName>
            <shortName>SPA</shortName>
        </alternativeName>
    </component>
</protein>
<name>TNFL6_MOUSE</name>
<sequence>MQQPMNYPCPQIFWVDSSATSSWAPPGSVFPCPSCGPRGPDQRRPPPPPPPVSPLPPPSQPLPLPPLTPLKKKDHNTNLWLPVVFFMVLVALVGMGLGMYQLFHLQKELAELREFTNQSLKVSSFEKQIANPSTPSEKKEPRSVAHLTGNPHSRSIPLEWEDTYGTALISGVKYKKGGLVINETGLYFVYSKVYFRGQSCNNQPLNHKVYMRNSKYPEDLVLMEEKRLNYCTTGQIWAHSSYLGAVFNLTSADHLYVNISQLSLINFEESKTFFGLYKL</sequence>
<dbReference type="EMBL" id="U06948">
    <property type="protein sequence ID" value="AAA17800.1"/>
    <property type="molecule type" value="mRNA"/>
</dbReference>
<dbReference type="EMBL" id="U10984">
    <property type="protein sequence ID" value="AAA19778.1"/>
    <property type="molecule type" value="mRNA"/>
</dbReference>
<dbReference type="EMBL" id="S76752">
    <property type="protein sequence ID" value="AAB33780.1"/>
    <property type="molecule type" value="mRNA"/>
</dbReference>
<dbReference type="EMBL" id="U58995">
    <property type="protein sequence ID" value="AAB02915.1"/>
    <property type="molecule type" value="mRNA"/>
</dbReference>
<dbReference type="EMBL" id="AF119335">
    <property type="protein sequence ID" value="AAD52106.1"/>
    <property type="molecule type" value="mRNA"/>
</dbReference>
<dbReference type="CCDS" id="CCDS15418.1">
    <molecule id="P41047-1"/>
</dbReference>
<dbReference type="PIR" id="A53062">
    <property type="entry name" value="A53062"/>
</dbReference>
<dbReference type="RefSeq" id="NP_034307.1">
    <molecule id="P41047-1"/>
    <property type="nucleotide sequence ID" value="NM_010177.4"/>
</dbReference>
<dbReference type="SMR" id="P41047"/>
<dbReference type="BioGRID" id="199595">
    <property type="interactions" value="2"/>
</dbReference>
<dbReference type="FunCoup" id="P41047">
    <property type="interactions" value="1231"/>
</dbReference>
<dbReference type="MINT" id="P41047"/>
<dbReference type="STRING" id="10090.ENSMUSP00000000834"/>
<dbReference type="GlyCosmos" id="P41047">
    <property type="glycosylation" value="4 sites, No reported glycans"/>
</dbReference>
<dbReference type="GlyGen" id="P41047">
    <property type="glycosylation" value="5 sites"/>
</dbReference>
<dbReference type="PhosphoSitePlus" id="P41047"/>
<dbReference type="PaxDb" id="10090-ENSMUSP00000000834"/>
<dbReference type="Antibodypedia" id="4418">
    <property type="antibodies" value="1382 antibodies from 46 providers"/>
</dbReference>
<dbReference type="DNASU" id="14103"/>
<dbReference type="Ensembl" id="ENSMUST00000000834.4">
    <molecule id="P41047-1"/>
    <property type="protein sequence ID" value="ENSMUSP00000000834.3"/>
    <property type="gene ID" value="ENSMUSG00000000817.11"/>
</dbReference>
<dbReference type="Ensembl" id="ENSMUST00000193648.2">
    <molecule id="P41047-2"/>
    <property type="protein sequence ID" value="ENSMUSP00000141422.2"/>
    <property type="gene ID" value="ENSMUSG00000000817.11"/>
</dbReference>
<dbReference type="GeneID" id="14103"/>
<dbReference type="KEGG" id="mmu:14103"/>
<dbReference type="UCSC" id="uc007dfr.2">
    <molecule id="P41047-1"/>
    <property type="organism name" value="mouse"/>
</dbReference>
<dbReference type="AGR" id="MGI:99255"/>
<dbReference type="CTD" id="14103"/>
<dbReference type="MGI" id="MGI:99255">
    <property type="gene designation" value="Fasl"/>
</dbReference>
<dbReference type="VEuPathDB" id="HostDB:ENSMUSG00000000817"/>
<dbReference type="eggNOG" id="ENOG502RXC1">
    <property type="taxonomic scope" value="Eukaryota"/>
</dbReference>
<dbReference type="GeneTree" id="ENSGT01060000248544"/>
<dbReference type="HOGENOM" id="CLU_070352_2_0_1"/>
<dbReference type="InParanoid" id="P41047"/>
<dbReference type="OMA" id="KVKRSAH"/>
<dbReference type="OrthoDB" id="5983780at2759"/>
<dbReference type="PhylomeDB" id="P41047"/>
<dbReference type="TreeFam" id="TF332169"/>
<dbReference type="Reactome" id="R-MMU-3371378">
    <property type="pathway name" value="Regulation by c-FLIP"/>
</dbReference>
<dbReference type="Reactome" id="R-MMU-5218900">
    <property type="pathway name" value="CASP8 activity is inhibited"/>
</dbReference>
<dbReference type="Reactome" id="R-MMU-69416">
    <property type="pathway name" value="Dimerization of procaspase-8"/>
</dbReference>
<dbReference type="Reactome" id="R-MMU-75157">
    <property type="pathway name" value="FasL/ CD95L signaling"/>
</dbReference>
<dbReference type="BioGRID-ORCS" id="14103">
    <property type="hits" value="1 hit in 79 CRISPR screens"/>
</dbReference>
<dbReference type="ChiTaRS" id="Fasl">
    <property type="organism name" value="mouse"/>
</dbReference>
<dbReference type="PRO" id="PR:P41047"/>
<dbReference type="Proteomes" id="UP000000589">
    <property type="component" value="Chromosome 1"/>
</dbReference>
<dbReference type="RNAct" id="P41047">
    <property type="molecule type" value="protein"/>
</dbReference>
<dbReference type="Bgee" id="ENSMUSG00000000817">
    <property type="expression patterns" value="Expressed in ectoplacental cone and 27 other cell types or tissues"/>
</dbReference>
<dbReference type="ExpressionAtlas" id="P41047">
    <property type="expression patterns" value="baseline and differential"/>
</dbReference>
<dbReference type="GO" id="GO:0005901">
    <property type="term" value="C:caveola"/>
    <property type="evidence" value="ECO:0007669"/>
    <property type="project" value="Ensembl"/>
</dbReference>
<dbReference type="GO" id="GO:0009986">
    <property type="term" value="C:cell surface"/>
    <property type="evidence" value="ECO:0000314"/>
    <property type="project" value="BHF-UCL"/>
</dbReference>
<dbReference type="GO" id="GO:0060205">
    <property type="term" value="C:cytoplasmic vesicle lumen"/>
    <property type="evidence" value="ECO:0007669"/>
    <property type="project" value="UniProtKB-SubCell"/>
</dbReference>
<dbReference type="GO" id="GO:0009897">
    <property type="term" value="C:external side of plasma membrane"/>
    <property type="evidence" value="ECO:0000314"/>
    <property type="project" value="MGI"/>
</dbReference>
<dbReference type="GO" id="GO:0070062">
    <property type="term" value="C:extracellular exosome"/>
    <property type="evidence" value="ECO:0007669"/>
    <property type="project" value="Ensembl"/>
</dbReference>
<dbReference type="GO" id="GO:0043202">
    <property type="term" value="C:lysosomal lumen"/>
    <property type="evidence" value="ECO:0007669"/>
    <property type="project" value="UniProtKB-SubCell"/>
</dbReference>
<dbReference type="GO" id="GO:0005634">
    <property type="term" value="C:nucleus"/>
    <property type="evidence" value="ECO:0000250"/>
    <property type="project" value="UniProtKB"/>
</dbReference>
<dbReference type="GO" id="GO:0048471">
    <property type="term" value="C:perinuclear region of cytoplasm"/>
    <property type="evidence" value="ECO:0007669"/>
    <property type="project" value="Ensembl"/>
</dbReference>
<dbReference type="GO" id="GO:0005125">
    <property type="term" value="F:cytokine activity"/>
    <property type="evidence" value="ECO:0007669"/>
    <property type="project" value="UniProtKB-KW"/>
</dbReference>
<dbReference type="GO" id="GO:0005123">
    <property type="term" value="F:death receptor binding"/>
    <property type="evidence" value="ECO:0007669"/>
    <property type="project" value="Ensembl"/>
</dbReference>
<dbReference type="GO" id="GO:0005164">
    <property type="term" value="F:tumor necrosis factor receptor binding"/>
    <property type="evidence" value="ECO:0007669"/>
    <property type="project" value="Ensembl"/>
</dbReference>
<dbReference type="GO" id="GO:0097190">
    <property type="term" value="P:apoptotic signaling pathway"/>
    <property type="evidence" value="ECO:0000314"/>
    <property type="project" value="MGI"/>
</dbReference>
<dbReference type="GO" id="GO:0071346">
    <property type="term" value="P:cellular response to type II interferon"/>
    <property type="evidence" value="ECO:0007669"/>
    <property type="project" value="Ensembl"/>
</dbReference>
<dbReference type="GO" id="GO:0048388">
    <property type="term" value="P:endosomal lumen acidification"/>
    <property type="evidence" value="ECO:0007669"/>
    <property type="project" value="Ensembl"/>
</dbReference>
<dbReference type="GO" id="GO:0008625">
    <property type="term" value="P:extrinsic apoptotic signaling pathway via death domain receptors"/>
    <property type="evidence" value="ECO:0000314"/>
    <property type="project" value="MGI"/>
</dbReference>
<dbReference type="GO" id="GO:0006925">
    <property type="term" value="P:inflammatory cell apoptotic process"/>
    <property type="evidence" value="ECO:0007669"/>
    <property type="project" value="Ensembl"/>
</dbReference>
<dbReference type="GO" id="GO:0030644">
    <property type="term" value="P:intracellular chloride ion homeostasis"/>
    <property type="evidence" value="ECO:0007669"/>
    <property type="project" value="Ensembl"/>
</dbReference>
<dbReference type="GO" id="GO:0097527">
    <property type="term" value="P:necroptotic signaling pathway"/>
    <property type="evidence" value="ECO:0007669"/>
    <property type="project" value="Ensembl"/>
</dbReference>
<dbReference type="GO" id="GO:0016525">
    <property type="term" value="P:negative regulation of angiogenesis"/>
    <property type="evidence" value="ECO:0007669"/>
    <property type="project" value="Ensembl"/>
</dbReference>
<dbReference type="GO" id="GO:0000122">
    <property type="term" value="P:negative regulation of transcription by RNA polymerase II"/>
    <property type="evidence" value="ECO:0000250"/>
    <property type="project" value="UniProtKB"/>
</dbReference>
<dbReference type="GO" id="GO:0043065">
    <property type="term" value="P:positive regulation of apoptotic process"/>
    <property type="evidence" value="ECO:0000266"/>
    <property type="project" value="MGI"/>
</dbReference>
<dbReference type="GO" id="GO:0043123">
    <property type="term" value="P:positive regulation of canonical NF-kappaB signal transduction"/>
    <property type="evidence" value="ECO:0007669"/>
    <property type="project" value="Ensembl"/>
</dbReference>
<dbReference type="GO" id="GO:0008284">
    <property type="term" value="P:positive regulation of cell population proliferation"/>
    <property type="evidence" value="ECO:0007669"/>
    <property type="project" value="Ensembl"/>
</dbReference>
<dbReference type="GO" id="GO:2000353">
    <property type="term" value="P:positive regulation of endothelial cell apoptotic process"/>
    <property type="evidence" value="ECO:0007669"/>
    <property type="project" value="Ensembl"/>
</dbReference>
<dbReference type="GO" id="GO:0045742">
    <property type="term" value="P:positive regulation of epidermal growth factor receptor signaling pathway"/>
    <property type="evidence" value="ECO:0007669"/>
    <property type="project" value="Ensembl"/>
</dbReference>
<dbReference type="GO" id="GO:0043525">
    <property type="term" value="P:positive regulation of neuron apoptotic process"/>
    <property type="evidence" value="ECO:0007669"/>
    <property type="project" value="Ensembl"/>
</dbReference>
<dbReference type="GO" id="GO:1905782">
    <property type="term" value="P:positive regulation of phosphatidylserine exposure on apoptotic cell surface"/>
    <property type="evidence" value="ECO:0007669"/>
    <property type="project" value="Ensembl"/>
</dbReference>
<dbReference type="GO" id="GO:1903514">
    <property type="term" value="P:release of sequestered calcium ion into cytosol by endoplasmic reticulum"/>
    <property type="evidence" value="ECO:0000266"/>
    <property type="project" value="MGI"/>
</dbReference>
<dbReference type="GO" id="GO:0070848">
    <property type="term" value="P:response to growth factor"/>
    <property type="evidence" value="ECO:0007669"/>
    <property type="project" value="Ensembl"/>
</dbReference>
<dbReference type="GO" id="GO:0032496">
    <property type="term" value="P:response to lipopolysaccharide"/>
    <property type="evidence" value="ECO:0007669"/>
    <property type="project" value="Ensembl"/>
</dbReference>
<dbReference type="GO" id="GO:0046666">
    <property type="term" value="P:retinal cell programmed cell death"/>
    <property type="evidence" value="ECO:0000315"/>
    <property type="project" value="MGI"/>
</dbReference>
<dbReference type="GO" id="GO:0070231">
    <property type="term" value="P:T cell apoptotic process"/>
    <property type="evidence" value="ECO:0007669"/>
    <property type="project" value="Ensembl"/>
</dbReference>
<dbReference type="CDD" id="cd00184">
    <property type="entry name" value="TNF"/>
    <property type="match status" value="1"/>
</dbReference>
<dbReference type="FunFam" id="2.60.120.40:FF:000017">
    <property type="entry name" value="Tumor necrosis factor ligand superfamily member 6"/>
    <property type="match status" value="1"/>
</dbReference>
<dbReference type="Gene3D" id="2.60.120.40">
    <property type="match status" value="1"/>
</dbReference>
<dbReference type="InterPro" id="IPR028326">
    <property type="entry name" value="FASL"/>
</dbReference>
<dbReference type="InterPro" id="IPR006053">
    <property type="entry name" value="TNF"/>
</dbReference>
<dbReference type="InterPro" id="IPR021184">
    <property type="entry name" value="TNF_CS"/>
</dbReference>
<dbReference type="InterPro" id="IPR006052">
    <property type="entry name" value="TNF_dom"/>
</dbReference>
<dbReference type="InterPro" id="IPR008983">
    <property type="entry name" value="Tumour_necrosis_fac-like_dom"/>
</dbReference>
<dbReference type="PANTHER" id="PTHR11471">
    <property type="entry name" value="TUMOR NECROSIS FACTOR FAMILY MEMBER"/>
    <property type="match status" value="1"/>
</dbReference>
<dbReference type="PANTHER" id="PTHR11471:SF33">
    <property type="entry name" value="TUMOR NECROSIS FACTOR LIGAND SUPERFAMILY MEMBER 6"/>
    <property type="match status" value="1"/>
</dbReference>
<dbReference type="Pfam" id="PF00229">
    <property type="entry name" value="TNF"/>
    <property type="match status" value="1"/>
</dbReference>
<dbReference type="PRINTS" id="PR01681">
    <property type="entry name" value="FASLIGAND"/>
</dbReference>
<dbReference type="PRINTS" id="PR01234">
    <property type="entry name" value="TNECROSISFCT"/>
</dbReference>
<dbReference type="SMART" id="SM00207">
    <property type="entry name" value="TNF"/>
    <property type="match status" value="1"/>
</dbReference>
<dbReference type="SUPFAM" id="SSF49842">
    <property type="entry name" value="TNF-like"/>
    <property type="match status" value="1"/>
</dbReference>
<dbReference type="PROSITE" id="PS00251">
    <property type="entry name" value="THD_1"/>
    <property type="match status" value="1"/>
</dbReference>
<dbReference type="PROSITE" id="PS50049">
    <property type="entry name" value="THD_2"/>
    <property type="match status" value="1"/>
</dbReference>